<evidence type="ECO:0000250" key="1"/>
<evidence type="ECO:0000250" key="2">
    <source>
        <dbReference type="UniProtKB" id="P9WQ37"/>
    </source>
</evidence>
<evidence type="ECO:0000269" key="3">
    <source>
    </source>
</evidence>
<evidence type="ECO:0000269" key="4">
    <source>
    </source>
</evidence>
<evidence type="ECO:0000269" key="5">
    <source>
    </source>
</evidence>
<evidence type="ECO:0000303" key="6">
    <source>
    </source>
</evidence>
<evidence type="ECO:0000305" key="7"/>
<evidence type="ECO:0000305" key="8">
    <source>
    </source>
</evidence>
<evidence type="ECO:0000305" key="9">
    <source>
    </source>
</evidence>
<feature type="chain" id="PRO_0000193132" description="Medium-chain fatty-acid--CoA ligase">
    <location>
        <begin position="1"/>
        <end position="566"/>
    </location>
</feature>
<feature type="binding site" evidence="1">
    <location>
        <begin position="231"/>
        <end position="242"/>
    </location>
    <ligand>
        <name>ATP</name>
        <dbReference type="ChEBI" id="CHEBI:30616"/>
    </ligand>
</feature>
<name>FADK_ECOLI</name>
<gene>
    <name evidence="6" type="primary">fadK</name>
    <name type="synonym">ydiD</name>
    <name type="ordered locus">b1701</name>
    <name type="ordered locus">JW5910</name>
</gene>
<proteinExistence type="evidence at protein level"/>
<sequence length="566" mass="62759">MHPTGPHLGPDVLFRESNMKVTLTFNEQRRAAYRQQGLWGDASLADYWQQTARAMPDKIAVVDNHGASYTYSALDHAASCLANWMLAKGIESGDRIAFQLPGWCEFTVIYLACLKIGAVSVPLLPSWREAELVWVLNKCQAKMFFAPTLFKQTRPVDLILPLQNQLPQLQQIVGVDKLAPATSSLSLSQIIADNTSLTTAITTHGDELAAVLFTSGTEGLPKGVMLTHNNILASERAYCARLNLTWQDVFMMPAPLGHATGFLHGVTAPFLIGARSVLLDIFTPDACLALLEQQRCTCMLGATPFVYDLLNVLEKQPADLSALRFFLCGGTTIPKKVARECQQRGIKLLSVYGSTESSPHAVVNLDDPLSRFMHTDGYAAAGVEIKVVDDARKTLPPGCEGEEASRGPNVFMGYFDEPELTARALDEEGWYYSGDLCRMDEAGYIKITGRKKDIIVRGGENISSREVEDILLQHPKIHDACVVAMSDERLGERSCAYVVLKAPHHSLSLEEVVAFFSRKRVAKYKYPEHIVVIEKLPRTTSGKIQKFLLRKDIMRRLTQDVCEEIE</sequence>
<keyword id="KW-0067">ATP-binding</keyword>
<keyword id="KW-1003">Cell membrane</keyword>
<keyword id="KW-0276">Fatty acid metabolism</keyword>
<keyword id="KW-0436">Ligase</keyword>
<keyword id="KW-0443">Lipid metabolism</keyword>
<keyword id="KW-0460">Magnesium</keyword>
<keyword id="KW-0472">Membrane</keyword>
<keyword id="KW-0547">Nucleotide-binding</keyword>
<keyword id="KW-1185">Reference proteome</keyword>
<reference key="1">
    <citation type="journal article" date="1996" name="DNA Res.">
        <title>A 570-kb DNA sequence of the Escherichia coli K-12 genome corresponding to the 28.0-40.1 min region on the linkage map.</title>
        <authorList>
            <person name="Aiba H."/>
            <person name="Baba T."/>
            <person name="Fujita K."/>
            <person name="Hayashi K."/>
            <person name="Inada T."/>
            <person name="Isono K."/>
            <person name="Itoh T."/>
            <person name="Kasai H."/>
            <person name="Kashimoto K."/>
            <person name="Kimura S."/>
            <person name="Kitakawa M."/>
            <person name="Kitagawa M."/>
            <person name="Makino K."/>
            <person name="Miki T."/>
            <person name="Mizobuchi K."/>
            <person name="Mori H."/>
            <person name="Mori T."/>
            <person name="Motomura K."/>
            <person name="Nakade S."/>
            <person name="Nakamura Y."/>
            <person name="Nashimoto H."/>
            <person name="Nishio Y."/>
            <person name="Oshima T."/>
            <person name="Saito N."/>
            <person name="Sampei G."/>
            <person name="Seki Y."/>
            <person name="Sivasundaram S."/>
            <person name="Tagami H."/>
            <person name="Takeda J."/>
            <person name="Takemoto K."/>
            <person name="Takeuchi Y."/>
            <person name="Wada C."/>
            <person name="Yamamoto Y."/>
            <person name="Horiuchi T."/>
        </authorList>
    </citation>
    <scope>NUCLEOTIDE SEQUENCE [LARGE SCALE GENOMIC DNA]</scope>
    <source>
        <strain>K12 / W3110 / ATCC 27325 / DSM 5911</strain>
    </source>
</reference>
<reference key="2">
    <citation type="journal article" date="1997" name="Science">
        <title>The complete genome sequence of Escherichia coli K-12.</title>
        <authorList>
            <person name="Blattner F.R."/>
            <person name="Plunkett G. III"/>
            <person name="Bloch C.A."/>
            <person name="Perna N.T."/>
            <person name="Burland V."/>
            <person name="Riley M."/>
            <person name="Collado-Vides J."/>
            <person name="Glasner J.D."/>
            <person name="Rode C.K."/>
            <person name="Mayhew G.F."/>
            <person name="Gregor J."/>
            <person name="Davis N.W."/>
            <person name="Kirkpatrick H.A."/>
            <person name="Goeden M.A."/>
            <person name="Rose D.J."/>
            <person name="Mau B."/>
            <person name="Shao Y."/>
        </authorList>
    </citation>
    <scope>NUCLEOTIDE SEQUENCE [LARGE SCALE GENOMIC DNA]</scope>
    <source>
        <strain>K12 / MG1655 / ATCC 47076</strain>
    </source>
</reference>
<reference key="3">
    <citation type="journal article" date="2006" name="Mol. Syst. Biol.">
        <title>Highly accurate genome sequences of Escherichia coli K-12 strains MG1655 and W3110.</title>
        <authorList>
            <person name="Hayashi K."/>
            <person name="Morooka N."/>
            <person name="Yamamoto Y."/>
            <person name="Fujita K."/>
            <person name="Isono K."/>
            <person name="Choi S."/>
            <person name="Ohtsubo E."/>
            <person name="Baba T."/>
            <person name="Wanner B.L."/>
            <person name="Mori H."/>
            <person name="Horiuchi T."/>
        </authorList>
    </citation>
    <scope>NUCLEOTIDE SEQUENCE [LARGE SCALE GENOMIC DNA]</scope>
    <source>
        <strain>K12 / W3110 / ATCC 27325 / DSM 5911</strain>
    </source>
</reference>
<reference key="4">
    <citation type="submission" date="1991-06" db="EMBL/GenBank/DDBJ databases">
        <title>The cloning and sequence of the E. coli pps gene.</title>
        <authorList>
            <person name="Holzschu D.L."/>
            <person name="McElver J.A."/>
            <person name="Liao C.C."/>
            <person name="Berry A."/>
        </authorList>
    </citation>
    <scope>NUCLEOTIDE SEQUENCE [GENOMIC DNA] OF 374-566</scope>
    <source>
        <strain>K12</strain>
    </source>
</reference>
<reference key="5">
    <citation type="journal article" date="1994" name="Nucleic Acids Res.">
        <title>Intrinsic and extrinsic approaches for detecting genes in a bacterial genome.</title>
        <authorList>
            <person name="Borodovsky M."/>
            <person name="Rudd K.E."/>
            <person name="Koonin E.V."/>
        </authorList>
    </citation>
    <scope>IDENTIFICATION</scope>
</reference>
<reference key="6">
    <citation type="journal article" date="2003" name="Mol. Microbiol.">
        <title>A new Escherichia coli metabolic competency: growth on fatty acids by a novel anaerobic beta-oxidation pathway.</title>
        <authorList>
            <person name="Campbell J.W."/>
            <person name="Morgan-Kiss R.M."/>
            <person name="Cronan J.E. Jr."/>
        </authorList>
    </citation>
    <scope>FUNCTION IN ANAEROBIC BETA-OXIDATION PATHWAY</scope>
    <scope>INDUCTION</scope>
    <scope>DISRUPTION PHENOTYPE</scope>
    <scope>PATHWAY</scope>
    <source>
        <strain>K12 / MG1655 / ATCC 47076</strain>
    </source>
</reference>
<reference key="7">
    <citation type="journal article" date="2004" name="J. Biol. Chem.">
        <title>The Escherichia coli fadK (ydiD) gene encodes an anerobically regulated short chain acyl-CoA synthetase.</title>
        <authorList>
            <person name="Morgan-Kiss R.M."/>
            <person name="Cronan J.E."/>
        </authorList>
    </citation>
    <scope>FUNCTION</scope>
    <scope>CATALYTIC ACTIVITY</scope>
    <scope>COFACTOR</scope>
    <scope>SUBSTRATE SPECIFICITY</scope>
    <scope>BIOPHYSICOCHEMICAL PROPERTIES</scope>
    <scope>SUBCELLULAR LOCATION</scope>
    <scope>INDUCTION</scope>
    <scope>IDENTIFICATION OF START CODON</scope>
    <source>
        <strain>K12 / MC1061 / ATCC 53338 / DSM 7140</strain>
    </source>
</reference>
<reference key="8">
    <citation type="journal article" date="2009" name="Chem. Biol.">
        <title>The dual function of the Mycobacterium tuberculosis FadD32 required for mycolic acid biosynthesis.</title>
        <authorList>
            <person name="Leger M."/>
            <person name="Gavalda S."/>
            <person name="Guillet V."/>
            <person name="van der Rest B."/>
            <person name="Slama N."/>
            <person name="Montrozier H."/>
            <person name="Mourey L."/>
            <person name="Quemard A."/>
            <person name="Daffe M."/>
            <person name="Marrakchi H."/>
        </authorList>
    </citation>
    <scope>FUNCTION</scope>
    <scope>CATALYTIC ACTIVITY</scope>
    <scope>SUBSTRATE SPECIFICITY</scope>
</reference>
<organism>
    <name type="scientific">Escherichia coli (strain K12)</name>
    <dbReference type="NCBI Taxonomy" id="83333"/>
    <lineage>
        <taxon>Bacteria</taxon>
        <taxon>Pseudomonadati</taxon>
        <taxon>Pseudomonadota</taxon>
        <taxon>Gammaproteobacteria</taxon>
        <taxon>Enterobacterales</taxon>
        <taxon>Enterobacteriaceae</taxon>
        <taxon>Escherichia</taxon>
    </lineage>
</organism>
<accession>P38135</accession>
<accession>P76202</accession>
<accession>P76902</accession>
<accession>P76903</accession>
<protein>
    <recommendedName>
        <fullName evidence="8 9">Medium-chain fatty-acid--CoA ligase</fullName>
        <ecNumber evidence="4 5">6.2.1.-</ecNumber>
    </recommendedName>
    <alternativeName>
        <fullName evidence="6">Acyl-CoA synthetase</fullName>
        <shortName evidence="6">ACS</shortName>
    </alternativeName>
    <alternativeName>
        <fullName evidence="7">Fatty acyl-CoA synthetase FadK</fullName>
    </alternativeName>
</protein>
<comment type="function">
    <text evidence="3 4 5">Catalyzes the esterification, concomitant with transport, of exogenous fatty acids into metabolically active CoA thioesters for subsequent degradation or incorporation into phospholipids. Is maximally active on C6:0, C8:0 and C12:0 fatty acids, while has a low activity on C14-C18 chain length fatty acids (PubMed:15213221, PubMed:19477415). Is involved in the anaerobic beta-oxidative degradation of fatty acids, which allows anaerobic growth of E.coli on fatty acids as a sole carbon and energy source in the presence of nitrate or fumarate as a terminal electron acceptor (PubMed:12535077). Can functionally replace FadD under anaerobic conditions (PubMed:12535077).</text>
</comment>
<comment type="catalytic activity">
    <reaction evidence="4">
        <text>hexanoate + ATP + CoA = hexanoyl-CoA + AMP + diphosphate</text>
        <dbReference type="Rhea" id="RHEA:43740"/>
        <dbReference type="ChEBI" id="CHEBI:17120"/>
        <dbReference type="ChEBI" id="CHEBI:30616"/>
        <dbReference type="ChEBI" id="CHEBI:33019"/>
        <dbReference type="ChEBI" id="CHEBI:57287"/>
        <dbReference type="ChEBI" id="CHEBI:62620"/>
        <dbReference type="ChEBI" id="CHEBI:456215"/>
    </reaction>
</comment>
<comment type="catalytic activity">
    <reaction evidence="4 5">
        <text>octanoate + ATP + CoA = octanoyl-CoA + AMP + diphosphate</text>
        <dbReference type="Rhea" id="RHEA:33631"/>
        <dbReference type="ChEBI" id="CHEBI:25646"/>
        <dbReference type="ChEBI" id="CHEBI:30616"/>
        <dbReference type="ChEBI" id="CHEBI:33019"/>
        <dbReference type="ChEBI" id="CHEBI:57287"/>
        <dbReference type="ChEBI" id="CHEBI:57386"/>
        <dbReference type="ChEBI" id="CHEBI:456215"/>
    </reaction>
</comment>
<comment type="catalytic activity">
    <reaction evidence="5">
        <text>dodecanoate + ATP + CoA = dodecanoyl-CoA + AMP + diphosphate</text>
        <dbReference type="Rhea" id="RHEA:33623"/>
        <dbReference type="ChEBI" id="CHEBI:18262"/>
        <dbReference type="ChEBI" id="CHEBI:30616"/>
        <dbReference type="ChEBI" id="CHEBI:33019"/>
        <dbReference type="ChEBI" id="CHEBI:57287"/>
        <dbReference type="ChEBI" id="CHEBI:57375"/>
        <dbReference type="ChEBI" id="CHEBI:456215"/>
    </reaction>
</comment>
<comment type="cofactor">
    <cofactor evidence="4">
        <name>Mg(2+)</name>
        <dbReference type="ChEBI" id="CHEBI:18420"/>
    </cofactor>
</comment>
<comment type="biophysicochemical properties">
    <phDependence>
        <text evidence="4">Optimum pH is 7.7-8.2.</text>
    </phDependence>
</comment>
<comment type="pathway">
    <text evidence="3 8">Lipid metabolism; fatty acid beta-oxidation.</text>
</comment>
<comment type="subunit">
    <text evidence="2">Homodimer.</text>
</comment>
<comment type="subcellular location">
    <subcellularLocation>
        <location>Cell membrane</location>
        <topology>Peripheral membrane protein</topology>
    </subcellularLocation>
    <text evidence="8">Partially membrane-associated.</text>
</comment>
<comment type="induction">
    <text evidence="3 4">Expression independent of FadR (PubMed:12535077). FadK is not expressed under aerobic growth conditions, the levels of anaerobic expression vary with the terminal electron acceptor, with more expression during growth on fumarate than on nitrate (at protein level) (PubMed:15213221).</text>
</comment>
<comment type="disruption phenotype">
    <text evidence="3">Cells lacking this gene grow normally on aerobic oleate plates, but grow relatively poorly on oleate plus nitrate plates under anaerobic conditions. The double fadD fadK deletion mutant fails to grow on fatty acids under either aerobic or anaerobic conditions, although fadD mutants grow on fatty acids under anaerobic conditions.</text>
</comment>
<comment type="miscellaneous">
    <text evidence="4">Probably starts on Met-1; overexpressed protein starting at Met-19 has lower activity, forms aggregates during reaction and is unstable in storage at -80 degrees Celsius (PubMed:15213221).</text>
</comment>
<comment type="miscellaneous">
    <text evidence="4">The enzymatic mechanism is a two-step reaction that proceeds via the intermediate formation of an acyl-adenylate (acyl-AMP) intermediate.</text>
</comment>
<comment type="similarity">
    <text evidence="7">Belongs to the ATP-dependent AMP-binding enzyme family.</text>
</comment>
<comment type="sequence caution" evidence="7">
    <conflict type="frameshift">
        <sequence resource="EMBL" id="M69116"/>
    </conflict>
</comment>
<dbReference type="EC" id="6.2.1.-" evidence="4 5"/>
<dbReference type="EMBL" id="U00096">
    <property type="protein sequence ID" value="AAC74771.3"/>
    <property type="molecule type" value="Genomic_DNA"/>
</dbReference>
<dbReference type="EMBL" id="AP009048">
    <property type="protein sequence ID" value="BAA15470.2"/>
    <property type="molecule type" value="Genomic_DNA"/>
</dbReference>
<dbReference type="EMBL" id="M69116">
    <property type="status" value="NOT_ANNOTATED_CDS"/>
    <property type="molecule type" value="Genomic_DNA"/>
</dbReference>
<dbReference type="PIR" id="E64928">
    <property type="entry name" value="E64928"/>
</dbReference>
<dbReference type="RefSeq" id="NP_416216.4">
    <property type="nucleotide sequence ID" value="NC_000913.3"/>
</dbReference>
<dbReference type="SMR" id="P38135"/>
<dbReference type="BioGRID" id="4260285">
    <property type="interactions" value="322"/>
</dbReference>
<dbReference type="FunCoup" id="P38135">
    <property type="interactions" value="493"/>
</dbReference>
<dbReference type="STRING" id="511145.b1701"/>
<dbReference type="SwissLipids" id="SLP:000000973"/>
<dbReference type="PaxDb" id="511145-b1701"/>
<dbReference type="EnsemblBacteria" id="AAC74771">
    <property type="protein sequence ID" value="AAC74771"/>
    <property type="gene ID" value="b1701"/>
</dbReference>
<dbReference type="GeneID" id="946213"/>
<dbReference type="KEGG" id="ecj:JW5910"/>
<dbReference type="KEGG" id="eco:b1701"/>
<dbReference type="PATRIC" id="fig|511145.12.peg.1772"/>
<dbReference type="EchoBASE" id="EB2260"/>
<dbReference type="eggNOG" id="COG0318">
    <property type="taxonomic scope" value="Bacteria"/>
</dbReference>
<dbReference type="HOGENOM" id="CLU_000022_59_7_6"/>
<dbReference type="InParanoid" id="P38135"/>
<dbReference type="OrthoDB" id="9803968at2"/>
<dbReference type="BioCyc" id="EcoCyc:EG12357-MONOMER"/>
<dbReference type="BioCyc" id="MetaCyc:EG12357-MONOMER"/>
<dbReference type="UniPathway" id="UPA00659"/>
<dbReference type="PRO" id="PR:P38135"/>
<dbReference type="Proteomes" id="UP000000625">
    <property type="component" value="Chromosome"/>
</dbReference>
<dbReference type="GO" id="GO:0005886">
    <property type="term" value="C:plasma membrane"/>
    <property type="evidence" value="ECO:0007669"/>
    <property type="project" value="UniProtKB-SubCell"/>
</dbReference>
<dbReference type="GO" id="GO:0005524">
    <property type="term" value="F:ATP binding"/>
    <property type="evidence" value="ECO:0007669"/>
    <property type="project" value="UniProtKB-KW"/>
</dbReference>
<dbReference type="GO" id="GO:0031956">
    <property type="term" value="F:medium-chain fatty acid-CoA ligase activity"/>
    <property type="evidence" value="ECO:0000314"/>
    <property type="project" value="EcoCyc"/>
</dbReference>
<dbReference type="GO" id="GO:0006635">
    <property type="term" value="P:fatty acid beta-oxidation"/>
    <property type="evidence" value="ECO:0007669"/>
    <property type="project" value="UniProtKB-UniPathway"/>
</dbReference>
<dbReference type="GO" id="GO:0019395">
    <property type="term" value="P:fatty acid oxidation"/>
    <property type="evidence" value="ECO:0000269"/>
    <property type="project" value="EcoCyc"/>
</dbReference>
<dbReference type="CDD" id="cd05903">
    <property type="entry name" value="CHC_CoA_lg"/>
    <property type="match status" value="1"/>
</dbReference>
<dbReference type="FunFam" id="3.30.300.30:FF:000026">
    <property type="entry name" value="Short-chain-fatty-acid--CoA ligase"/>
    <property type="match status" value="1"/>
</dbReference>
<dbReference type="FunFam" id="3.40.50.12780:FF:000044">
    <property type="entry name" value="Short-chain-fatty-acid--CoA ligase"/>
    <property type="match status" value="1"/>
</dbReference>
<dbReference type="Gene3D" id="3.30.300.30">
    <property type="match status" value="1"/>
</dbReference>
<dbReference type="Gene3D" id="3.40.50.12780">
    <property type="entry name" value="N-terminal domain of ligase-like"/>
    <property type="match status" value="1"/>
</dbReference>
<dbReference type="InterPro" id="IPR025110">
    <property type="entry name" value="AMP-bd_C"/>
</dbReference>
<dbReference type="InterPro" id="IPR045851">
    <property type="entry name" value="AMP-bd_C_sf"/>
</dbReference>
<dbReference type="InterPro" id="IPR020845">
    <property type="entry name" value="AMP-binding_CS"/>
</dbReference>
<dbReference type="InterPro" id="IPR000873">
    <property type="entry name" value="AMP-dep_synth/lig_dom"/>
</dbReference>
<dbReference type="InterPro" id="IPR042099">
    <property type="entry name" value="ANL_N_sf"/>
</dbReference>
<dbReference type="NCBIfam" id="NF004758">
    <property type="entry name" value="PRK06087.1"/>
    <property type="match status" value="1"/>
</dbReference>
<dbReference type="PANTHER" id="PTHR43201">
    <property type="entry name" value="ACYL-COA SYNTHETASE"/>
    <property type="match status" value="1"/>
</dbReference>
<dbReference type="PANTHER" id="PTHR43201:SF5">
    <property type="entry name" value="MEDIUM-CHAIN ACYL-COA LIGASE ACSF2, MITOCHONDRIAL"/>
    <property type="match status" value="1"/>
</dbReference>
<dbReference type="Pfam" id="PF00501">
    <property type="entry name" value="AMP-binding"/>
    <property type="match status" value="1"/>
</dbReference>
<dbReference type="Pfam" id="PF13193">
    <property type="entry name" value="AMP-binding_C"/>
    <property type="match status" value="1"/>
</dbReference>
<dbReference type="SUPFAM" id="SSF56801">
    <property type="entry name" value="Acetyl-CoA synthetase-like"/>
    <property type="match status" value="1"/>
</dbReference>
<dbReference type="PROSITE" id="PS00455">
    <property type="entry name" value="AMP_BINDING"/>
    <property type="match status" value="1"/>
</dbReference>